<reference key="1">
    <citation type="journal article" date="2001" name="Genes Genet. Syst.">
        <title>Auxin response factor family in rice.</title>
        <authorList>
            <person name="Sato Y."/>
            <person name="Nishimura A."/>
            <person name="Ito M."/>
            <person name="Ashikari M."/>
            <person name="Hirano H.-Y."/>
            <person name="Matsuoka M."/>
        </authorList>
    </citation>
    <scope>NUCLEOTIDE SEQUENCE [MRNA]</scope>
    <source>
        <strain>cv. Nipponbare</strain>
    </source>
</reference>
<reference key="2">
    <citation type="journal article" date="2005" name="Nature">
        <title>The map-based sequence of the rice genome.</title>
        <authorList>
            <consortium name="International rice genome sequencing project (IRGSP)"/>
        </authorList>
    </citation>
    <scope>NUCLEOTIDE SEQUENCE [LARGE SCALE GENOMIC DNA]</scope>
    <source>
        <strain>cv. Nipponbare</strain>
    </source>
</reference>
<reference key="3">
    <citation type="journal article" date="2008" name="Nucleic Acids Res.">
        <title>The rice annotation project database (RAP-DB): 2008 update.</title>
        <authorList>
            <consortium name="The rice annotation project (RAP)"/>
        </authorList>
    </citation>
    <scope>GENOME REANNOTATION</scope>
    <source>
        <strain>cv. Nipponbare</strain>
    </source>
</reference>
<reference key="4">
    <citation type="journal article" date="2013" name="Rice">
        <title>Improvement of the Oryza sativa Nipponbare reference genome using next generation sequence and optical map data.</title>
        <authorList>
            <person name="Kawahara Y."/>
            <person name="de la Bastide M."/>
            <person name="Hamilton J.P."/>
            <person name="Kanamori H."/>
            <person name="McCombie W.R."/>
            <person name="Ouyang S."/>
            <person name="Schwartz D.C."/>
            <person name="Tanaka T."/>
            <person name="Wu J."/>
            <person name="Zhou S."/>
            <person name="Childs K.L."/>
            <person name="Davidson R.M."/>
            <person name="Lin H."/>
            <person name="Quesada-Ocampo L."/>
            <person name="Vaillancourt B."/>
            <person name="Sakai H."/>
            <person name="Lee S.S."/>
            <person name="Kim J."/>
            <person name="Numa H."/>
            <person name="Itoh T."/>
            <person name="Buell C.R."/>
            <person name="Matsumoto T."/>
        </authorList>
    </citation>
    <scope>GENOME REANNOTATION</scope>
    <source>
        <strain>cv. Nipponbare</strain>
    </source>
</reference>
<reference key="5">
    <citation type="journal article" date="2007" name="Gene">
        <title>Genome-wide analysis of the auxin response factors (ARF) gene family in rice (Oryza sativa).</title>
        <authorList>
            <person name="Wang D."/>
            <person name="Pei K."/>
            <person name="Fu Y."/>
            <person name="Sun Z."/>
            <person name="Li S."/>
            <person name="Liu H."/>
            <person name="Tang K."/>
            <person name="Han B."/>
            <person name="Tao Y."/>
        </authorList>
    </citation>
    <scope>GENE FAMILY</scope>
    <scope>TISSUE SPECIFICITY</scope>
    <scope>INDUCTION</scope>
    <scope>NOMENCLATURE</scope>
</reference>
<dbReference type="EMBL" id="AB071291">
    <property type="protein sequence ID" value="BAB85911.1"/>
    <property type="molecule type" value="mRNA"/>
</dbReference>
<dbReference type="EMBL" id="AP008207">
    <property type="protein sequence ID" value="BAF05739.1"/>
    <property type="molecule type" value="Genomic_DNA"/>
</dbReference>
<dbReference type="EMBL" id="AP014957">
    <property type="status" value="NOT_ANNOTATED_CDS"/>
    <property type="molecule type" value="Genomic_DNA"/>
</dbReference>
<dbReference type="RefSeq" id="XP_015647511.1">
    <property type="nucleotide sequence ID" value="XM_015792025.1"/>
</dbReference>
<dbReference type="SMR" id="Q0JKI9"/>
<dbReference type="FunCoup" id="Q0JKI9">
    <property type="interactions" value="1883"/>
</dbReference>
<dbReference type="STRING" id="39947.Q0JKI9"/>
<dbReference type="PaxDb" id="39947-Q0JKI9"/>
<dbReference type="EnsemblPlants" id="Os01t0670800-02">
    <property type="protein sequence ID" value="Os01t0670800-02"/>
    <property type="gene ID" value="Os01g0670800"/>
</dbReference>
<dbReference type="GeneID" id="4325895"/>
<dbReference type="Gramene" id="Os01t0670800-02">
    <property type="protein sequence ID" value="Os01t0670800-02"/>
    <property type="gene ID" value="Os01g0670800"/>
</dbReference>
<dbReference type="KEGG" id="dosa:Os01g0670800"/>
<dbReference type="eggNOG" id="ENOG502QQSY">
    <property type="taxonomic scope" value="Eukaryota"/>
</dbReference>
<dbReference type="HOGENOM" id="CLU_002626_2_2_1"/>
<dbReference type="InParanoid" id="Q0JKI9"/>
<dbReference type="OrthoDB" id="624437at2759"/>
<dbReference type="PlantReactome" id="R-OSA-5608118">
    <property type="pathway name" value="Auxin signalling"/>
</dbReference>
<dbReference type="Proteomes" id="UP000000763">
    <property type="component" value="Chromosome 1"/>
</dbReference>
<dbReference type="Proteomes" id="UP000059680">
    <property type="component" value="Chromosome 1"/>
</dbReference>
<dbReference type="ExpressionAtlas" id="Q0JKI9">
    <property type="expression patterns" value="baseline and differential"/>
</dbReference>
<dbReference type="GO" id="GO:0005634">
    <property type="term" value="C:nucleus"/>
    <property type="evidence" value="ECO:0007669"/>
    <property type="project" value="UniProtKB-SubCell"/>
</dbReference>
<dbReference type="GO" id="GO:0003677">
    <property type="term" value="F:DNA binding"/>
    <property type="evidence" value="ECO:0007669"/>
    <property type="project" value="UniProtKB-KW"/>
</dbReference>
<dbReference type="GO" id="GO:0009734">
    <property type="term" value="P:auxin-activated signaling pathway"/>
    <property type="evidence" value="ECO:0007669"/>
    <property type="project" value="UniProtKB-KW"/>
</dbReference>
<dbReference type="GO" id="GO:0006355">
    <property type="term" value="P:regulation of DNA-templated transcription"/>
    <property type="evidence" value="ECO:0007669"/>
    <property type="project" value="InterPro"/>
</dbReference>
<dbReference type="CDD" id="cd10017">
    <property type="entry name" value="B3_DNA"/>
    <property type="match status" value="1"/>
</dbReference>
<dbReference type="FunFam" id="2.30.30.1040:FF:000001">
    <property type="entry name" value="Auxin response factor"/>
    <property type="match status" value="1"/>
</dbReference>
<dbReference type="FunFam" id="2.40.330.10:FF:000001">
    <property type="entry name" value="Auxin response factor"/>
    <property type="match status" value="1"/>
</dbReference>
<dbReference type="Gene3D" id="2.30.30.1040">
    <property type="match status" value="1"/>
</dbReference>
<dbReference type="Gene3D" id="2.40.330.10">
    <property type="entry name" value="DNA-binding pseudobarrel domain"/>
    <property type="match status" value="1"/>
</dbReference>
<dbReference type="InterPro" id="IPR010525">
    <property type="entry name" value="ARF_dom"/>
</dbReference>
<dbReference type="InterPro" id="IPR044835">
    <property type="entry name" value="ARF_plant"/>
</dbReference>
<dbReference type="InterPro" id="IPR003340">
    <property type="entry name" value="B3_DNA-bd"/>
</dbReference>
<dbReference type="InterPro" id="IPR015300">
    <property type="entry name" value="DNA-bd_pseudobarrel_sf"/>
</dbReference>
<dbReference type="PANTHER" id="PTHR31384:SF182">
    <property type="entry name" value="AUXIN RESPONSE FACTOR 2"/>
    <property type="match status" value="1"/>
</dbReference>
<dbReference type="PANTHER" id="PTHR31384">
    <property type="entry name" value="AUXIN RESPONSE FACTOR 4-RELATED"/>
    <property type="match status" value="1"/>
</dbReference>
<dbReference type="Pfam" id="PF06507">
    <property type="entry name" value="ARF_AD"/>
    <property type="match status" value="1"/>
</dbReference>
<dbReference type="Pfam" id="PF02362">
    <property type="entry name" value="B3"/>
    <property type="match status" value="1"/>
</dbReference>
<dbReference type="SMART" id="SM01019">
    <property type="entry name" value="B3"/>
    <property type="match status" value="1"/>
</dbReference>
<dbReference type="SUPFAM" id="SSF101936">
    <property type="entry name" value="DNA-binding pseudobarrel domain"/>
    <property type="match status" value="1"/>
</dbReference>
<dbReference type="PROSITE" id="PS50863">
    <property type="entry name" value="B3"/>
    <property type="match status" value="1"/>
</dbReference>
<keyword id="KW-0927">Auxin signaling pathway</keyword>
<keyword id="KW-0238">DNA-binding</keyword>
<keyword id="KW-0539">Nucleus</keyword>
<keyword id="KW-1185">Reference proteome</keyword>
<keyword id="KW-0804">Transcription</keyword>
<keyword id="KW-0805">Transcription regulation</keyword>
<accession>Q0JKI9</accession>
<accession>Q8S984</accession>
<organism>
    <name type="scientific">Oryza sativa subsp. japonica</name>
    <name type="common">Rice</name>
    <dbReference type="NCBI Taxonomy" id="39947"/>
    <lineage>
        <taxon>Eukaryota</taxon>
        <taxon>Viridiplantae</taxon>
        <taxon>Streptophyta</taxon>
        <taxon>Embryophyta</taxon>
        <taxon>Tracheophyta</taxon>
        <taxon>Spermatophyta</taxon>
        <taxon>Magnoliopsida</taxon>
        <taxon>Liliopsida</taxon>
        <taxon>Poales</taxon>
        <taxon>Poaceae</taxon>
        <taxon>BOP clade</taxon>
        <taxon>Oryzoideae</taxon>
        <taxon>Oryzeae</taxon>
        <taxon>Oryzinae</taxon>
        <taxon>Oryza</taxon>
        <taxon>Oryza sativa</taxon>
    </lineage>
</organism>
<feature type="chain" id="PRO_0000299255" description="Auxin response factor 2">
    <location>
        <begin position="1"/>
        <end position="718"/>
    </location>
</feature>
<feature type="DNA-binding region" description="TF-B3" evidence="2">
    <location>
        <begin position="147"/>
        <end position="249"/>
    </location>
</feature>
<feature type="region of interest" description="Disordered" evidence="3">
    <location>
        <begin position="1"/>
        <end position="24"/>
    </location>
</feature>
<feature type="compositionally biased region" description="Acidic residues" evidence="3">
    <location>
        <begin position="8"/>
        <end position="18"/>
    </location>
</feature>
<evidence type="ECO:0000250" key="1"/>
<evidence type="ECO:0000255" key="2">
    <source>
        <dbReference type="PROSITE-ProRule" id="PRU00326"/>
    </source>
</evidence>
<evidence type="ECO:0000256" key="3">
    <source>
        <dbReference type="SAM" id="MobiDB-lite"/>
    </source>
</evidence>
<evidence type="ECO:0000269" key="4">
    <source>
    </source>
</evidence>
<evidence type="ECO:0000305" key="5"/>
<name>ARFB_ORYSJ</name>
<sequence length="718" mass="78684">MVGIDLNTVEEEEDEEEGGATGTVTAPAEARAGGAVCLELWHACAGPVAPLPRKGSAVVYLPQGHLEHLGAAPGSGPGAAVPPHVFCRVVDVSLHADAATDEVYAQVSLVADNEEVERRMREGEDGAACDGEGEDAVKRPARIPHMFCKTLTASDTSTHGGFSVPRRAAEDCFPPLDYSLQRPFQELVAKDLHGTEWRFRHIYRGQPRRHLLTTGWSGFINKKKLVSGDAVLFLRGEDGELRLGVRRAAQLKNASPFPALHNQISNTSSLSEVAHAVAVKSIFHIYYNPRLSQSEFIIPYWKFMRSFSQPFSVGMRFKLRYESEDASERRRTGIIIGSREADPMWHGSKWKCLVVKWDDDVECRRPNGVSPWEIELSGSVSGSHLSTPHSKRLKSCFPQVNPDIVLPNGSVSSDFAESARFHKVLQGQELLGLKTRDGTVNTASQATEARNFQYTDERSCSINMSNNILGVPRLGVKTPSGNPGFSYHCSGFGESQRFQEVLQGQEVFRPYRGGTLSDACIRGSGFRQPDGNHAPGAAFKWLAPQGCDHHGITTSVLPQASSPSSVLMFPQTSSKMPGLEYIYGCLDRNENSRHFKIGPTQDMTRTDQTLRLWPHLISGKVLDECTRNEKLHSPVSGAEHESNNKCLNTNGCKIFGISLTEKAQAGDEVDCGNASYHSRLQSLKPQMPKSLGSSCATVHEQRPVVGRVVDISAVNTMI</sequence>
<protein>
    <recommendedName>
        <fullName>Auxin response factor 2</fullName>
    </recommendedName>
    <alternativeName>
        <fullName>ETTIN-like protein 2</fullName>
    </alternativeName>
    <alternativeName>
        <fullName>OsETTIN2</fullName>
    </alternativeName>
</protein>
<gene>
    <name type="primary">ARF2</name>
    <name type="ordered locus">Os01g0670800</name>
    <name type="ordered locus">LOC_Os01g48060</name>
</gene>
<comment type="function">
    <text>Auxin response factors (ARFs) are transcriptional factors that bind specifically to the DNA sequence 5'-TGTCTC-3' found in the auxin-responsive promoter elements (AuxREs).</text>
</comment>
<comment type="subunit">
    <text evidence="1">Homo and heterodimers.</text>
</comment>
<comment type="subcellular location">
    <subcellularLocation>
        <location evidence="2">Nucleus</location>
    </subcellularLocation>
</comment>
<comment type="tissue specificity">
    <text evidence="4">Expressed in roots, culms, leaves and young panicles.</text>
</comment>
<comment type="induction">
    <text evidence="4">By auxin under dark condition.</text>
</comment>
<comment type="similarity">
    <text evidence="5">Belongs to the ARF family.</text>
</comment>
<proteinExistence type="evidence at transcript level"/>